<protein>
    <recommendedName>
        <fullName evidence="1">UPF0178 protein Pcar_2632</fullName>
    </recommendedName>
</protein>
<comment type="similarity">
    <text evidence="1">Belongs to the UPF0178 family.</text>
</comment>
<accession>Q3A187</accession>
<reference key="1">
    <citation type="submission" date="2005-10" db="EMBL/GenBank/DDBJ databases">
        <title>Complete sequence of Pelobacter carbinolicus DSM 2380.</title>
        <authorList>
            <person name="Copeland A."/>
            <person name="Lucas S."/>
            <person name="Lapidus A."/>
            <person name="Barry K."/>
            <person name="Detter J.C."/>
            <person name="Glavina T."/>
            <person name="Hammon N."/>
            <person name="Israni S."/>
            <person name="Pitluck S."/>
            <person name="Chertkov O."/>
            <person name="Schmutz J."/>
            <person name="Larimer F."/>
            <person name="Land M."/>
            <person name="Kyrpides N."/>
            <person name="Ivanova N."/>
            <person name="Richardson P."/>
        </authorList>
    </citation>
    <scope>NUCLEOTIDE SEQUENCE [LARGE SCALE GENOMIC DNA]</scope>
    <source>
        <strain>DSM 2380 / NBRC 103641 / GraBd1</strain>
    </source>
</reference>
<name>Y2632_SYNC1</name>
<keyword id="KW-1185">Reference proteome</keyword>
<organism>
    <name type="scientific">Syntrophotalea carbinolica (strain DSM 2380 / NBRC 103641 / GraBd1)</name>
    <name type="common">Pelobacter carbinolicus</name>
    <dbReference type="NCBI Taxonomy" id="338963"/>
    <lineage>
        <taxon>Bacteria</taxon>
        <taxon>Pseudomonadati</taxon>
        <taxon>Thermodesulfobacteriota</taxon>
        <taxon>Desulfuromonadia</taxon>
        <taxon>Desulfuromonadales</taxon>
        <taxon>Syntrophotaleaceae</taxon>
        <taxon>Syntrophotalea</taxon>
    </lineage>
</organism>
<dbReference type="EMBL" id="CP000142">
    <property type="protein sequence ID" value="ABA89870.1"/>
    <property type="molecule type" value="Genomic_DNA"/>
</dbReference>
<dbReference type="RefSeq" id="WP_011342410.1">
    <property type="nucleotide sequence ID" value="NC_007498.2"/>
</dbReference>
<dbReference type="STRING" id="338963.Pcar_2632"/>
<dbReference type="KEGG" id="pca:Pcar_2632"/>
<dbReference type="eggNOG" id="COG1671">
    <property type="taxonomic scope" value="Bacteria"/>
</dbReference>
<dbReference type="HOGENOM" id="CLU_106619_2_1_7"/>
<dbReference type="OrthoDB" id="9798918at2"/>
<dbReference type="Proteomes" id="UP000002534">
    <property type="component" value="Chromosome"/>
</dbReference>
<dbReference type="CDD" id="cd18720">
    <property type="entry name" value="PIN_YqxD-like"/>
    <property type="match status" value="1"/>
</dbReference>
<dbReference type="HAMAP" id="MF_00489">
    <property type="entry name" value="UPF0178"/>
    <property type="match status" value="1"/>
</dbReference>
<dbReference type="InterPro" id="IPR003791">
    <property type="entry name" value="UPF0178"/>
</dbReference>
<dbReference type="NCBIfam" id="NF001095">
    <property type="entry name" value="PRK00124.1"/>
    <property type="match status" value="1"/>
</dbReference>
<dbReference type="PANTHER" id="PTHR35146">
    <property type="entry name" value="UPF0178 PROTEIN YAII"/>
    <property type="match status" value="1"/>
</dbReference>
<dbReference type="PANTHER" id="PTHR35146:SF1">
    <property type="entry name" value="UPF0178 PROTEIN YAII"/>
    <property type="match status" value="1"/>
</dbReference>
<dbReference type="Pfam" id="PF02639">
    <property type="entry name" value="DUF188"/>
    <property type="match status" value="1"/>
</dbReference>
<gene>
    <name type="ordered locus">Pcar_2632</name>
</gene>
<proteinExistence type="inferred from homology"/>
<evidence type="ECO:0000255" key="1">
    <source>
        <dbReference type="HAMAP-Rule" id="MF_00489"/>
    </source>
</evidence>
<feature type="chain" id="PRO_0000241818" description="UPF0178 protein Pcar_2632">
    <location>
        <begin position="1"/>
        <end position="148"/>
    </location>
</feature>
<sequence length="148" mass="16183">MKIWVDADACPAVIKEILFKAARRTGVSMTLVANHLMRIPPSPHIHFMLVAAGLDAADNEIVKKLDAGDLVITADIPLAAQVIEKGGHALNPRGELYTVDNIRERLSMRDFMDSLRASGIDTGGPAALNQSDRQAFANRLDQFLTRHV</sequence>